<keyword id="KW-0963">Cytoplasm</keyword>
<keyword id="KW-0539">Nucleus</keyword>
<keyword id="KW-0653">Protein transport</keyword>
<keyword id="KW-1185">Reference proteome</keyword>
<keyword id="KW-0813">Transport</keyword>
<dbReference type="EMBL" id="AM270336">
    <property type="protein sequence ID" value="CAL00983.1"/>
    <property type="molecule type" value="Genomic_DNA"/>
</dbReference>
<dbReference type="RefSeq" id="XP_001396709.1">
    <property type="nucleotide sequence ID" value="XM_001396672.2"/>
</dbReference>
<dbReference type="SMR" id="A2R4V1"/>
<dbReference type="EnsemblFungi" id="CAL00983">
    <property type="protein sequence ID" value="CAL00983"/>
    <property type="gene ID" value="An15g01700"/>
</dbReference>
<dbReference type="GeneID" id="4987771"/>
<dbReference type="KEGG" id="ang:An15g01700"/>
<dbReference type="VEuPathDB" id="FungiDB:An15g01700"/>
<dbReference type="HOGENOM" id="CLU_057806_2_0_1"/>
<dbReference type="Proteomes" id="UP000006706">
    <property type="component" value="Chromosome 3R"/>
</dbReference>
<dbReference type="GO" id="GO:0005854">
    <property type="term" value="C:nascent polypeptide-associated complex"/>
    <property type="evidence" value="ECO:0007669"/>
    <property type="project" value="EnsemblFungi"/>
</dbReference>
<dbReference type="GO" id="GO:0005634">
    <property type="term" value="C:nucleus"/>
    <property type="evidence" value="ECO:0007669"/>
    <property type="project" value="UniProtKB-SubCell"/>
</dbReference>
<dbReference type="GO" id="GO:0015031">
    <property type="term" value="P:protein transport"/>
    <property type="evidence" value="ECO:0007669"/>
    <property type="project" value="UniProtKB-KW"/>
</dbReference>
<dbReference type="CDD" id="cd22054">
    <property type="entry name" value="NAC_NACA"/>
    <property type="match status" value="1"/>
</dbReference>
<dbReference type="CDD" id="cd14358">
    <property type="entry name" value="UBA_NAC_euk"/>
    <property type="match status" value="1"/>
</dbReference>
<dbReference type="FunFam" id="2.20.70.30:FF:000002">
    <property type="entry name" value="Nascent polypeptide-associated complex (NAC), alpha subunit"/>
    <property type="match status" value="1"/>
</dbReference>
<dbReference type="FunFam" id="1.10.8.10:FF:000006">
    <property type="entry name" value="Putative nascent polypeptide-associated complex subunit alpha"/>
    <property type="match status" value="1"/>
</dbReference>
<dbReference type="Gene3D" id="1.10.8.10">
    <property type="entry name" value="DNA helicase RuvA subunit, C-terminal domain"/>
    <property type="match status" value="1"/>
</dbReference>
<dbReference type="Gene3D" id="2.20.70.30">
    <property type="entry name" value="Nascent polypeptide-associated complex domain"/>
    <property type="match status" value="1"/>
</dbReference>
<dbReference type="InterPro" id="IPR016641">
    <property type="entry name" value="EGD2/NACA0like"/>
</dbReference>
<dbReference type="InterPro" id="IPR044034">
    <property type="entry name" value="NAC-like_UBA"/>
</dbReference>
<dbReference type="InterPro" id="IPR038187">
    <property type="entry name" value="NAC_A/B_dom_sf"/>
</dbReference>
<dbReference type="InterPro" id="IPR002715">
    <property type="entry name" value="Nas_poly-pep-assoc_cplx_dom"/>
</dbReference>
<dbReference type="PANTHER" id="PTHR21713">
    <property type="entry name" value="NASCENT POLYPEPTIDE ASSOCIATED COMPLEX ALPHA SUBUNIT-RELATED"/>
    <property type="match status" value="1"/>
</dbReference>
<dbReference type="Pfam" id="PF01849">
    <property type="entry name" value="NAC"/>
    <property type="match status" value="1"/>
</dbReference>
<dbReference type="Pfam" id="PF19026">
    <property type="entry name" value="UBA_HYPK"/>
    <property type="match status" value="1"/>
</dbReference>
<dbReference type="PIRSF" id="PIRSF015901">
    <property type="entry name" value="NAC_alpha"/>
    <property type="match status" value="1"/>
</dbReference>
<dbReference type="SMART" id="SM01407">
    <property type="entry name" value="NAC"/>
    <property type="match status" value="1"/>
</dbReference>
<dbReference type="PROSITE" id="PS51151">
    <property type="entry name" value="NAC_AB"/>
    <property type="match status" value="1"/>
</dbReference>
<accession>A2R4V1</accession>
<name>NACA_ASPNC</name>
<reference key="1">
    <citation type="journal article" date="2007" name="Nat. Biotechnol.">
        <title>Genome sequencing and analysis of the versatile cell factory Aspergillus niger CBS 513.88.</title>
        <authorList>
            <person name="Pel H.J."/>
            <person name="de Winde J.H."/>
            <person name="Archer D.B."/>
            <person name="Dyer P.S."/>
            <person name="Hofmann G."/>
            <person name="Schaap P.J."/>
            <person name="Turner G."/>
            <person name="de Vries R.P."/>
            <person name="Albang R."/>
            <person name="Albermann K."/>
            <person name="Andersen M.R."/>
            <person name="Bendtsen J.D."/>
            <person name="Benen J.A.E."/>
            <person name="van den Berg M."/>
            <person name="Breestraat S."/>
            <person name="Caddick M.X."/>
            <person name="Contreras R."/>
            <person name="Cornell M."/>
            <person name="Coutinho P.M."/>
            <person name="Danchin E.G.J."/>
            <person name="Debets A.J.M."/>
            <person name="Dekker P."/>
            <person name="van Dijck P.W.M."/>
            <person name="van Dijk A."/>
            <person name="Dijkhuizen L."/>
            <person name="Driessen A.J.M."/>
            <person name="d'Enfert C."/>
            <person name="Geysens S."/>
            <person name="Goosen C."/>
            <person name="Groot G.S.P."/>
            <person name="de Groot P.W.J."/>
            <person name="Guillemette T."/>
            <person name="Henrissat B."/>
            <person name="Herweijer M."/>
            <person name="van den Hombergh J.P.T.W."/>
            <person name="van den Hondel C.A.M.J.J."/>
            <person name="van der Heijden R.T.J.M."/>
            <person name="van der Kaaij R.M."/>
            <person name="Klis F.M."/>
            <person name="Kools H.J."/>
            <person name="Kubicek C.P."/>
            <person name="van Kuyk P.A."/>
            <person name="Lauber J."/>
            <person name="Lu X."/>
            <person name="van der Maarel M.J.E.C."/>
            <person name="Meulenberg R."/>
            <person name="Menke H."/>
            <person name="Mortimer M.A."/>
            <person name="Nielsen J."/>
            <person name="Oliver S.G."/>
            <person name="Olsthoorn M."/>
            <person name="Pal K."/>
            <person name="van Peij N.N.M.E."/>
            <person name="Ram A.F.J."/>
            <person name="Rinas U."/>
            <person name="Roubos J.A."/>
            <person name="Sagt C.M.J."/>
            <person name="Schmoll M."/>
            <person name="Sun J."/>
            <person name="Ussery D."/>
            <person name="Varga J."/>
            <person name="Vervecken W."/>
            <person name="van de Vondervoort P.J.J."/>
            <person name="Wedler H."/>
            <person name="Woesten H.A.B."/>
            <person name="Zeng A.-P."/>
            <person name="van Ooyen A.J.J."/>
            <person name="Visser J."/>
            <person name="Stam H."/>
        </authorList>
    </citation>
    <scope>NUCLEOTIDE SEQUENCE [LARGE SCALE GENOMIC DNA]</scope>
    <source>
        <strain>ATCC MYA-4892 / CBS 513.88 / FGSC A1513</strain>
    </source>
</reference>
<organism>
    <name type="scientific">Aspergillus niger (strain ATCC MYA-4892 / CBS 513.88 / FGSC A1513)</name>
    <dbReference type="NCBI Taxonomy" id="425011"/>
    <lineage>
        <taxon>Eukaryota</taxon>
        <taxon>Fungi</taxon>
        <taxon>Dikarya</taxon>
        <taxon>Ascomycota</taxon>
        <taxon>Pezizomycotina</taxon>
        <taxon>Eurotiomycetes</taxon>
        <taxon>Eurotiomycetidae</taxon>
        <taxon>Eurotiales</taxon>
        <taxon>Aspergillaceae</taxon>
        <taxon>Aspergillus</taxon>
        <taxon>Aspergillus subgen. Circumdati</taxon>
    </lineage>
</organism>
<gene>
    <name type="primary">egd2</name>
    <name type="ORF">An15g01700</name>
</gene>
<comment type="function">
    <text evidence="1">Component of the nascent polypeptide-associated complex (NAC), a dynamic component of the ribosomal exit tunnel, protecting the emerging polypeptides from interaction with other cytoplasmic proteins to ensure appropriate nascent protein targeting. The NAC complex also promotes mitochondrial protein import by enhancing productive ribosome interactions with the outer mitochondrial membrane and blocks the inappropriate interaction of ribosomes translating non-secretory nascent polypeptides with translocation sites in the membrane of the endoplasmic reticulum. Egd2 may also be involved in transcription regulation (By similarity).</text>
</comment>
<comment type="subunit">
    <text evidence="1">Part of the nascent polypeptide-associated complex (NAC), consisting of egd2 and egd1. NAC associates with ribosomes via egd1 (By similarity).</text>
</comment>
<comment type="subcellular location">
    <subcellularLocation>
        <location evidence="1">Cytoplasm</location>
    </subcellularLocation>
    <subcellularLocation>
        <location evidence="1">Nucleus</location>
    </subcellularLocation>
    <text evidence="1">Predominantly cytoplasmic, may also transiently localize to the nucleus.</text>
</comment>
<comment type="similarity">
    <text evidence="4">Belongs to the NAC-alpha family.</text>
</comment>
<evidence type="ECO:0000250" key="1"/>
<evidence type="ECO:0000255" key="2">
    <source>
        <dbReference type="PROSITE-ProRule" id="PRU00507"/>
    </source>
</evidence>
<evidence type="ECO:0000256" key="3">
    <source>
        <dbReference type="SAM" id="MobiDB-lite"/>
    </source>
</evidence>
<evidence type="ECO:0000305" key="4"/>
<sequence>MADPRVEELPDEEVPKTNVEDAGSSSESEAGDEPTIPGGAAVTIHSRNEKKARKAIGKLGLKHVPGITRVTLRRPKNILFVINQPDVYRSPSSNTWIIFGEAKIEDLNATAQATAAQQLAEAAANEHAGHDHEHDHGKGKAPEAEAKKEEEEDDGEEVDESGLEAKDIELVMAQANVSRKKAVKALRENDNDIVNSIMALSI</sequence>
<feature type="chain" id="PRO_0000282681" description="Nascent polypeptide-associated complex subunit alpha">
    <location>
        <begin position="1"/>
        <end position="202"/>
    </location>
</feature>
<feature type="domain" description="NAC-A/B" evidence="2">
    <location>
        <begin position="46"/>
        <end position="111"/>
    </location>
</feature>
<feature type="domain" description="UBA">
    <location>
        <begin position="163"/>
        <end position="202"/>
    </location>
</feature>
<feature type="region of interest" description="Disordered" evidence="3">
    <location>
        <begin position="1"/>
        <end position="42"/>
    </location>
</feature>
<feature type="region of interest" description="Disordered" evidence="3">
    <location>
        <begin position="117"/>
        <end position="165"/>
    </location>
</feature>
<feature type="compositionally biased region" description="Basic and acidic residues" evidence="3">
    <location>
        <begin position="1"/>
        <end position="19"/>
    </location>
</feature>
<feature type="compositionally biased region" description="Low complexity" evidence="3">
    <location>
        <begin position="117"/>
        <end position="126"/>
    </location>
</feature>
<feature type="compositionally biased region" description="Basic and acidic residues" evidence="3">
    <location>
        <begin position="127"/>
        <end position="149"/>
    </location>
</feature>
<feature type="compositionally biased region" description="Acidic residues" evidence="3">
    <location>
        <begin position="150"/>
        <end position="162"/>
    </location>
</feature>
<protein>
    <recommendedName>
        <fullName>Nascent polypeptide-associated complex subunit alpha</fullName>
        <shortName>NAC-alpha</shortName>
    </recommendedName>
    <alternativeName>
        <fullName>Alpha-NAC</fullName>
    </alternativeName>
</protein>
<proteinExistence type="inferred from homology"/>